<dbReference type="EC" id="6.1.1.3" evidence="1"/>
<dbReference type="EMBL" id="BA000031">
    <property type="protein sequence ID" value="BAC59543.1"/>
    <property type="molecule type" value="Genomic_DNA"/>
</dbReference>
<dbReference type="RefSeq" id="NP_797659.1">
    <property type="nucleotide sequence ID" value="NC_004603.1"/>
</dbReference>
<dbReference type="RefSeq" id="WP_005490070.1">
    <property type="nucleotide sequence ID" value="NC_004603.1"/>
</dbReference>
<dbReference type="SMR" id="Q87Q70"/>
<dbReference type="GeneID" id="1188785"/>
<dbReference type="KEGG" id="vpa:VP1280"/>
<dbReference type="PATRIC" id="fig|223926.6.peg.1220"/>
<dbReference type="eggNOG" id="COG0441">
    <property type="taxonomic scope" value="Bacteria"/>
</dbReference>
<dbReference type="HOGENOM" id="CLU_008554_0_1_6"/>
<dbReference type="Proteomes" id="UP000002493">
    <property type="component" value="Chromosome 1"/>
</dbReference>
<dbReference type="GO" id="GO:0005829">
    <property type="term" value="C:cytosol"/>
    <property type="evidence" value="ECO:0007669"/>
    <property type="project" value="TreeGrafter"/>
</dbReference>
<dbReference type="GO" id="GO:0005524">
    <property type="term" value="F:ATP binding"/>
    <property type="evidence" value="ECO:0007669"/>
    <property type="project" value="UniProtKB-UniRule"/>
</dbReference>
<dbReference type="GO" id="GO:0046872">
    <property type="term" value="F:metal ion binding"/>
    <property type="evidence" value="ECO:0007669"/>
    <property type="project" value="UniProtKB-KW"/>
</dbReference>
<dbReference type="GO" id="GO:0004829">
    <property type="term" value="F:threonine-tRNA ligase activity"/>
    <property type="evidence" value="ECO:0007669"/>
    <property type="project" value="UniProtKB-UniRule"/>
</dbReference>
<dbReference type="GO" id="GO:0000049">
    <property type="term" value="F:tRNA binding"/>
    <property type="evidence" value="ECO:0007669"/>
    <property type="project" value="UniProtKB-KW"/>
</dbReference>
<dbReference type="GO" id="GO:0006435">
    <property type="term" value="P:threonyl-tRNA aminoacylation"/>
    <property type="evidence" value="ECO:0007669"/>
    <property type="project" value="UniProtKB-UniRule"/>
</dbReference>
<dbReference type="CDD" id="cd01667">
    <property type="entry name" value="TGS_ThrRS"/>
    <property type="match status" value="1"/>
</dbReference>
<dbReference type="CDD" id="cd00860">
    <property type="entry name" value="ThrRS_anticodon"/>
    <property type="match status" value="1"/>
</dbReference>
<dbReference type="CDD" id="cd00771">
    <property type="entry name" value="ThrRS_core"/>
    <property type="match status" value="1"/>
</dbReference>
<dbReference type="FunFam" id="3.10.20.30:FF:000005">
    <property type="entry name" value="Threonine--tRNA ligase"/>
    <property type="match status" value="1"/>
</dbReference>
<dbReference type="FunFam" id="3.30.54.20:FF:000002">
    <property type="entry name" value="Threonine--tRNA ligase"/>
    <property type="match status" value="1"/>
</dbReference>
<dbReference type="FunFam" id="3.30.930.10:FF:000002">
    <property type="entry name" value="Threonine--tRNA ligase"/>
    <property type="match status" value="1"/>
</dbReference>
<dbReference type="FunFam" id="3.40.50.800:FF:000001">
    <property type="entry name" value="Threonine--tRNA ligase"/>
    <property type="match status" value="1"/>
</dbReference>
<dbReference type="FunFam" id="3.30.980.10:FF:000005">
    <property type="entry name" value="Threonyl-tRNA synthetase, mitochondrial"/>
    <property type="match status" value="1"/>
</dbReference>
<dbReference type="Gene3D" id="3.10.20.30">
    <property type="match status" value="1"/>
</dbReference>
<dbReference type="Gene3D" id="3.30.54.20">
    <property type="match status" value="1"/>
</dbReference>
<dbReference type="Gene3D" id="3.40.50.800">
    <property type="entry name" value="Anticodon-binding domain"/>
    <property type="match status" value="1"/>
</dbReference>
<dbReference type="Gene3D" id="3.30.930.10">
    <property type="entry name" value="Bira Bifunctional Protein, Domain 2"/>
    <property type="match status" value="1"/>
</dbReference>
<dbReference type="Gene3D" id="3.30.980.10">
    <property type="entry name" value="Threonyl-trna Synthetase, Chain A, domain 2"/>
    <property type="match status" value="1"/>
</dbReference>
<dbReference type="HAMAP" id="MF_00184">
    <property type="entry name" value="Thr_tRNA_synth"/>
    <property type="match status" value="1"/>
</dbReference>
<dbReference type="InterPro" id="IPR002314">
    <property type="entry name" value="aa-tRNA-synt_IIb"/>
</dbReference>
<dbReference type="InterPro" id="IPR006195">
    <property type="entry name" value="aa-tRNA-synth_II"/>
</dbReference>
<dbReference type="InterPro" id="IPR045864">
    <property type="entry name" value="aa-tRNA-synth_II/BPL/LPL"/>
</dbReference>
<dbReference type="InterPro" id="IPR004154">
    <property type="entry name" value="Anticodon-bd"/>
</dbReference>
<dbReference type="InterPro" id="IPR036621">
    <property type="entry name" value="Anticodon-bd_dom_sf"/>
</dbReference>
<dbReference type="InterPro" id="IPR012675">
    <property type="entry name" value="Beta-grasp_dom_sf"/>
</dbReference>
<dbReference type="InterPro" id="IPR004095">
    <property type="entry name" value="TGS"/>
</dbReference>
<dbReference type="InterPro" id="IPR012676">
    <property type="entry name" value="TGS-like"/>
</dbReference>
<dbReference type="InterPro" id="IPR002320">
    <property type="entry name" value="Thr-tRNA-ligase_IIa"/>
</dbReference>
<dbReference type="InterPro" id="IPR018163">
    <property type="entry name" value="Thr/Ala-tRNA-synth_IIc_edit"/>
</dbReference>
<dbReference type="InterPro" id="IPR047246">
    <property type="entry name" value="ThrRS_anticodon"/>
</dbReference>
<dbReference type="InterPro" id="IPR033728">
    <property type="entry name" value="ThrRS_core"/>
</dbReference>
<dbReference type="InterPro" id="IPR012947">
    <property type="entry name" value="tRNA_SAD"/>
</dbReference>
<dbReference type="NCBIfam" id="TIGR00418">
    <property type="entry name" value="thrS"/>
    <property type="match status" value="1"/>
</dbReference>
<dbReference type="PANTHER" id="PTHR11451:SF44">
    <property type="entry name" value="THREONINE--TRNA LIGASE, CHLOROPLASTIC_MITOCHONDRIAL 2"/>
    <property type="match status" value="1"/>
</dbReference>
<dbReference type="PANTHER" id="PTHR11451">
    <property type="entry name" value="THREONINE-TRNA LIGASE"/>
    <property type="match status" value="1"/>
</dbReference>
<dbReference type="Pfam" id="PF03129">
    <property type="entry name" value="HGTP_anticodon"/>
    <property type="match status" value="1"/>
</dbReference>
<dbReference type="Pfam" id="PF02824">
    <property type="entry name" value="TGS"/>
    <property type="match status" value="1"/>
</dbReference>
<dbReference type="Pfam" id="PF00587">
    <property type="entry name" value="tRNA-synt_2b"/>
    <property type="match status" value="1"/>
</dbReference>
<dbReference type="Pfam" id="PF07973">
    <property type="entry name" value="tRNA_SAD"/>
    <property type="match status" value="1"/>
</dbReference>
<dbReference type="PRINTS" id="PR01047">
    <property type="entry name" value="TRNASYNTHTHR"/>
</dbReference>
<dbReference type="SMART" id="SM00863">
    <property type="entry name" value="tRNA_SAD"/>
    <property type="match status" value="1"/>
</dbReference>
<dbReference type="SUPFAM" id="SSF52954">
    <property type="entry name" value="Class II aaRS ABD-related"/>
    <property type="match status" value="1"/>
</dbReference>
<dbReference type="SUPFAM" id="SSF55681">
    <property type="entry name" value="Class II aaRS and biotin synthetases"/>
    <property type="match status" value="1"/>
</dbReference>
<dbReference type="SUPFAM" id="SSF81271">
    <property type="entry name" value="TGS-like"/>
    <property type="match status" value="1"/>
</dbReference>
<dbReference type="SUPFAM" id="SSF55186">
    <property type="entry name" value="ThrRS/AlaRS common domain"/>
    <property type="match status" value="1"/>
</dbReference>
<dbReference type="PROSITE" id="PS50862">
    <property type="entry name" value="AA_TRNA_LIGASE_II"/>
    <property type="match status" value="1"/>
</dbReference>
<dbReference type="PROSITE" id="PS51880">
    <property type="entry name" value="TGS"/>
    <property type="match status" value="1"/>
</dbReference>
<evidence type="ECO:0000255" key="1">
    <source>
        <dbReference type="HAMAP-Rule" id="MF_00184"/>
    </source>
</evidence>
<evidence type="ECO:0000255" key="2">
    <source>
        <dbReference type="PROSITE-ProRule" id="PRU01228"/>
    </source>
</evidence>
<organism>
    <name type="scientific">Vibrio parahaemolyticus serotype O3:K6 (strain RIMD 2210633)</name>
    <dbReference type="NCBI Taxonomy" id="223926"/>
    <lineage>
        <taxon>Bacteria</taxon>
        <taxon>Pseudomonadati</taxon>
        <taxon>Pseudomonadota</taxon>
        <taxon>Gammaproteobacteria</taxon>
        <taxon>Vibrionales</taxon>
        <taxon>Vibrionaceae</taxon>
        <taxon>Vibrio</taxon>
    </lineage>
</organism>
<reference key="1">
    <citation type="journal article" date="2003" name="Lancet">
        <title>Genome sequence of Vibrio parahaemolyticus: a pathogenic mechanism distinct from that of V. cholerae.</title>
        <authorList>
            <person name="Makino K."/>
            <person name="Oshima K."/>
            <person name="Kurokawa K."/>
            <person name="Yokoyama K."/>
            <person name="Uda T."/>
            <person name="Tagomori K."/>
            <person name="Iijima Y."/>
            <person name="Najima M."/>
            <person name="Nakano M."/>
            <person name="Yamashita A."/>
            <person name="Kubota Y."/>
            <person name="Kimura S."/>
            <person name="Yasunaga T."/>
            <person name="Honda T."/>
            <person name="Shinagawa H."/>
            <person name="Hattori M."/>
            <person name="Iida T."/>
        </authorList>
    </citation>
    <scope>NUCLEOTIDE SEQUENCE [LARGE SCALE GENOMIC DNA]</scope>
    <source>
        <strain>RIMD 2210633</strain>
    </source>
</reference>
<proteinExistence type="inferred from homology"/>
<sequence length="642" mass="73761">MPIITLPDGSQRQFDNPVSTMEVAQSIGPGLAKATIAGRVNGNRVDACDLIEEDASLEIITVKDEVDGLEIVRHSCAHLLGHALKQLYPQAKMAIGPTIDNGFYYDIDLDESLTQEDLEKIEKRMKELAKTKYEVVKKKVSWQEARDTFESRGEPYKVEILDENVSRDDRPGLYHHEEYIDMCRGPHVPNMGFCQHFTLLNVAGAYWRGNSDNKMLQRIYGTAFHDKKALKAHLTRLEEAAKRDHRKIGKQLDLFHMQQEAPGMVFWHHNGWSIFRDLEVFVRDKLNEYDYQEVKGPLMMDRVLWERSGHWDKYADAMFTTSSENREYAIKPMNCPGHVQIFNQGLKSYRDLPLRMAEFGSCHRNEPSGALHGIMRVRGFTQDDAHIFCTESQIQEEVTSCIKMVYDTYQTFGFDNIVVKLSTRPEKRVGSDEIWDQSEEALKQSLESMEIPYEIQEGEGAFYGPKIEFTLYDCLDRAWQCGTVQLDFNLPGRLGATYVGENNERLVPVMIHRAILGSLERFIGILIEEYAGFFPTWLAPEQAVLMNITDKQSGYVQEIVQKLQKSGIRAKADLRNEKIGFKIREHTLKRVPYMLVVGDQEMEAGEIAVRTRKGKDLGKFKVDDFIAYIQDEISSRKLNLEE</sequence>
<comment type="function">
    <text evidence="1">Catalyzes the attachment of threonine to tRNA(Thr) in a two-step reaction: L-threonine is first activated by ATP to form Thr-AMP and then transferred to the acceptor end of tRNA(Thr). Also edits incorrectly charged L-seryl-tRNA(Thr).</text>
</comment>
<comment type="catalytic activity">
    <reaction evidence="1">
        <text>tRNA(Thr) + L-threonine + ATP = L-threonyl-tRNA(Thr) + AMP + diphosphate + H(+)</text>
        <dbReference type="Rhea" id="RHEA:24624"/>
        <dbReference type="Rhea" id="RHEA-COMP:9670"/>
        <dbReference type="Rhea" id="RHEA-COMP:9704"/>
        <dbReference type="ChEBI" id="CHEBI:15378"/>
        <dbReference type="ChEBI" id="CHEBI:30616"/>
        <dbReference type="ChEBI" id="CHEBI:33019"/>
        <dbReference type="ChEBI" id="CHEBI:57926"/>
        <dbReference type="ChEBI" id="CHEBI:78442"/>
        <dbReference type="ChEBI" id="CHEBI:78534"/>
        <dbReference type="ChEBI" id="CHEBI:456215"/>
        <dbReference type="EC" id="6.1.1.3"/>
    </reaction>
</comment>
<comment type="cofactor">
    <cofactor evidence="1">
        <name>Zn(2+)</name>
        <dbReference type="ChEBI" id="CHEBI:29105"/>
    </cofactor>
    <text evidence="1">Binds 1 zinc ion per subunit.</text>
</comment>
<comment type="subunit">
    <text evidence="1">Homodimer.</text>
</comment>
<comment type="subcellular location">
    <subcellularLocation>
        <location evidence="1">Cytoplasm</location>
    </subcellularLocation>
</comment>
<comment type="similarity">
    <text evidence="1">Belongs to the class-II aminoacyl-tRNA synthetase family.</text>
</comment>
<protein>
    <recommendedName>
        <fullName evidence="1">Threonine--tRNA ligase</fullName>
        <ecNumber evidence="1">6.1.1.3</ecNumber>
    </recommendedName>
    <alternativeName>
        <fullName evidence="1">Threonyl-tRNA synthetase</fullName>
        <shortName evidence="1">ThrRS</shortName>
    </alternativeName>
</protein>
<gene>
    <name evidence="1" type="primary">thrS</name>
    <name type="ordered locus">VP1280</name>
</gene>
<name>SYT_VIBPA</name>
<keyword id="KW-0030">Aminoacyl-tRNA synthetase</keyword>
<keyword id="KW-0067">ATP-binding</keyword>
<keyword id="KW-0963">Cytoplasm</keyword>
<keyword id="KW-0436">Ligase</keyword>
<keyword id="KW-0479">Metal-binding</keyword>
<keyword id="KW-0547">Nucleotide-binding</keyword>
<keyword id="KW-0648">Protein biosynthesis</keyword>
<keyword id="KW-0694">RNA-binding</keyword>
<keyword id="KW-0820">tRNA-binding</keyword>
<keyword id="KW-0862">Zinc</keyword>
<feature type="chain" id="PRO_0000101083" description="Threonine--tRNA ligase">
    <location>
        <begin position="1"/>
        <end position="642"/>
    </location>
</feature>
<feature type="domain" description="TGS" evidence="2">
    <location>
        <begin position="1"/>
        <end position="61"/>
    </location>
</feature>
<feature type="region of interest" description="Catalytic" evidence="1">
    <location>
        <begin position="244"/>
        <end position="535"/>
    </location>
</feature>
<feature type="binding site" evidence="1">
    <location>
        <position position="335"/>
    </location>
    <ligand>
        <name>Zn(2+)</name>
        <dbReference type="ChEBI" id="CHEBI:29105"/>
    </ligand>
</feature>
<feature type="binding site" evidence="1">
    <location>
        <position position="386"/>
    </location>
    <ligand>
        <name>Zn(2+)</name>
        <dbReference type="ChEBI" id="CHEBI:29105"/>
    </ligand>
</feature>
<feature type="binding site" evidence="1">
    <location>
        <position position="512"/>
    </location>
    <ligand>
        <name>Zn(2+)</name>
        <dbReference type="ChEBI" id="CHEBI:29105"/>
    </ligand>
</feature>
<accession>Q87Q70</accession>